<protein>
    <recommendedName>
        <fullName>UPF0425 pyridoxal phosphate-dependent protein MMP0002</fullName>
    </recommendedName>
</protein>
<feature type="chain" id="PRO_0000285293" description="UPF0425 pyridoxal phosphate-dependent protein MMP0002">
    <location>
        <begin position="1"/>
        <end position="354"/>
    </location>
</feature>
<feature type="modified residue" description="N6-(pyridoxal phosphate)lysine" evidence="1">
    <location>
        <position position="210"/>
    </location>
</feature>
<accession>Q6M1B4</accession>
<organism>
    <name type="scientific">Methanococcus maripaludis (strain DSM 14266 / JCM 13030 / NBRC 101832 / S2 / LL)</name>
    <dbReference type="NCBI Taxonomy" id="267377"/>
    <lineage>
        <taxon>Archaea</taxon>
        <taxon>Methanobacteriati</taxon>
        <taxon>Methanobacteriota</taxon>
        <taxon>Methanomada group</taxon>
        <taxon>Methanococci</taxon>
        <taxon>Methanococcales</taxon>
        <taxon>Methanococcaceae</taxon>
        <taxon>Methanococcus</taxon>
    </lineage>
</organism>
<reference key="1">
    <citation type="journal article" date="2004" name="J. Bacteriol.">
        <title>Complete genome sequence of the genetically tractable hydrogenotrophic methanogen Methanococcus maripaludis.</title>
        <authorList>
            <person name="Hendrickson E.L."/>
            <person name="Kaul R."/>
            <person name="Zhou Y."/>
            <person name="Bovee D."/>
            <person name="Chapman P."/>
            <person name="Chung J."/>
            <person name="Conway de Macario E."/>
            <person name="Dodsworth J.A."/>
            <person name="Gillett W."/>
            <person name="Graham D.E."/>
            <person name="Hackett M."/>
            <person name="Haydock A.K."/>
            <person name="Kang A."/>
            <person name="Land M.L."/>
            <person name="Levy R."/>
            <person name="Lie T.J."/>
            <person name="Major T.A."/>
            <person name="Moore B.C."/>
            <person name="Porat I."/>
            <person name="Palmeiri A."/>
            <person name="Rouse G."/>
            <person name="Saenphimmachak C."/>
            <person name="Soell D."/>
            <person name="Van Dien S."/>
            <person name="Wang T."/>
            <person name="Whitman W.B."/>
            <person name="Xia Q."/>
            <person name="Zhang Y."/>
            <person name="Larimer F.W."/>
            <person name="Olson M.V."/>
            <person name="Leigh J.A."/>
        </authorList>
    </citation>
    <scope>NUCLEOTIDE SEQUENCE [LARGE SCALE GENOMIC DNA]</scope>
    <source>
        <strain>DSM 14266 / JCM 13030 / NBRC 101832 / S2 / LL</strain>
    </source>
</reference>
<dbReference type="EMBL" id="BX950229">
    <property type="protein sequence ID" value="CAF29558.1"/>
    <property type="molecule type" value="Genomic_DNA"/>
</dbReference>
<dbReference type="RefSeq" id="WP_011169946.1">
    <property type="nucleotide sequence ID" value="NC_005791.1"/>
</dbReference>
<dbReference type="SMR" id="Q6M1B4"/>
<dbReference type="STRING" id="267377.MMP0002"/>
<dbReference type="EnsemblBacteria" id="CAF29558">
    <property type="protein sequence ID" value="CAF29558"/>
    <property type="gene ID" value="MMP0002"/>
</dbReference>
<dbReference type="GeneID" id="2761917"/>
<dbReference type="KEGG" id="mmp:MMP0002"/>
<dbReference type="PATRIC" id="fig|267377.15.peg.2"/>
<dbReference type="eggNOG" id="arCOG00114">
    <property type="taxonomic scope" value="Archaea"/>
</dbReference>
<dbReference type="HOGENOM" id="CLU_055443_0_0_2"/>
<dbReference type="OrthoDB" id="67852at2157"/>
<dbReference type="Proteomes" id="UP000000590">
    <property type="component" value="Chromosome"/>
</dbReference>
<dbReference type="GO" id="GO:0004125">
    <property type="term" value="F:L-seryl-tRNA(Sec) selenium transferase activity"/>
    <property type="evidence" value="ECO:0007669"/>
    <property type="project" value="TreeGrafter"/>
</dbReference>
<dbReference type="Gene3D" id="3.90.1150.70">
    <property type="match status" value="1"/>
</dbReference>
<dbReference type="Gene3D" id="3.40.640.10">
    <property type="entry name" value="Type I PLP-dependent aspartate aminotransferase-like (Major domain)"/>
    <property type="match status" value="1"/>
</dbReference>
<dbReference type="InterPro" id="IPR020033">
    <property type="entry name" value="PyrdxlP-dep_transferase_arc"/>
</dbReference>
<dbReference type="InterPro" id="IPR015424">
    <property type="entry name" value="PyrdxlP-dep_Trfase"/>
</dbReference>
<dbReference type="InterPro" id="IPR015421">
    <property type="entry name" value="PyrdxlP-dep_Trfase_major"/>
</dbReference>
<dbReference type="InterPro" id="IPR018319">
    <property type="entry name" value="SelA-like"/>
</dbReference>
<dbReference type="InterPro" id="IPR055177">
    <property type="entry name" value="UPF0425_MJ0158-like_C"/>
</dbReference>
<dbReference type="NCBIfam" id="TIGR03576">
    <property type="entry name" value="pyridox_MJ0158"/>
    <property type="match status" value="1"/>
</dbReference>
<dbReference type="PANTHER" id="PTHR32328">
    <property type="entry name" value="L-SERYL-TRNA(SEC) SELENIUM TRANSFERASE"/>
    <property type="match status" value="1"/>
</dbReference>
<dbReference type="PANTHER" id="PTHR32328:SF0">
    <property type="entry name" value="L-SERYL-TRNA(SEC) SELENIUM TRANSFERASE"/>
    <property type="match status" value="1"/>
</dbReference>
<dbReference type="Pfam" id="PF03841">
    <property type="entry name" value="SelA"/>
    <property type="match status" value="1"/>
</dbReference>
<dbReference type="Pfam" id="PF22583">
    <property type="entry name" value="UPF0425_C"/>
    <property type="match status" value="1"/>
</dbReference>
<dbReference type="SUPFAM" id="SSF53383">
    <property type="entry name" value="PLP-dependent transferases"/>
    <property type="match status" value="1"/>
</dbReference>
<keyword id="KW-0663">Pyridoxal phosphate</keyword>
<keyword id="KW-1185">Reference proteome</keyword>
<proteinExistence type="inferred from homology"/>
<comment type="cofactor">
    <cofactor evidence="1">
        <name>pyridoxal 5'-phosphate</name>
        <dbReference type="ChEBI" id="CHEBI:597326"/>
    </cofactor>
</comment>
<comment type="similarity">
    <text evidence="2">Belongs to the UPF0425 family.</text>
</comment>
<comment type="caution">
    <text evidence="2">Despite a certain similarity to selA, this is not selA (see AC Q57622).</text>
</comment>
<sequence>MDSLLELNRVNTAREIIRKKIQNTGRNSIYDLTGLCGGFEICEENLKLIETYVGPAIFSEKLNNAGLSHLSGNSKIHNAVCFNRTSSAILSTIMTLSKSFEKLVHYVPEKPAHPSIPRSCKIFGMEYFESDSLEEILSKIDENSFTAITGATMDHKVVSEEIACKIIDYAKSKNSPVFFDDASGARLRKLYKESPALEMGADLVVTSMDKLMDGPRAGLLAGDKNLVDKIYSEGLKFGLEAQAPIMAAVVTALERFDLNNLKDAFERAEKVDLSVFEAEKIEYKKTPTGFIIKNSSEEKLIETALKLLENYGIVTITAAGMPGASKNIRIDFCSKDAERISDEYVINAVLNSLK</sequence>
<name>Y002_METMP</name>
<evidence type="ECO:0000250" key="1"/>
<evidence type="ECO:0000305" key="2"/>
<gene>
    <name type="ordered locus">MMP0002</name>
</gene>